<accession>A0KU60</accession>
<proteinExistence type="inferred from homology"/>
<organism>
    <name type="scientific">Shewanella sp. (strain ANA-3)</name>
    <dbReference type="NCBI Taxonomy" id="94122"/>
    <lineage>
        <taxon>Bacteria</taxon>
        <taxon>Pseudomonadati</taxon>
        <taxon>Pseudomonadota</taxon>
        <taxon>Gammaproteobacteria</taxon>
        <taxon>Alteromonadales</taxon>
        <taxon>Shewanellaceae</taxon>
        <taxon>Shewanella</taxon>
    </lineage>
</organism>
<name>GLYA_SHESA</name>
<protein>
    <recommendedName>
        <fullName evidence="1">Serine hydroxymethyltransferase</fullName>
        <shortName evidence="1">SHMT</shortName>
        <shortName evidence="1">Serine methylase</shortName>
        <ecNumber evidence="1">2.1.2.1</ecNumber>
    </recommendedName>
</protein>
<reference key="1">
    <citation type="submission" date="2006-09" db="EMBL/GenBank/DDBJ databases">
        <title>Complete sequence of chromosome 1 of Shewanella sp. ANA-3.</title>
        <authorList>
            <person name="Copeland A."/>
            <person name="Lucas S."/>
            <person name="Lapidus A."/>
            <person name="Barry K."/>
            <person name="Detter J.C."/>
            <person name="Glavina del Rio T."/>
            <person name="Hammon N."/>
            <person name="Israni S."/>
            <person name="Dalin E."/>
            <person name="Tice H."/>
            <person name="Pitluck S."/>
            <person name="Chertkov O."/>
            <person name="Brettin T."/>
            <person name="Bruce D."/>
            <person name="Han C."/>
            <person name="Tapia R."/>
            <person name="Gilna P."/>
            <person name="Schmutz J."/>
            <person name="Larimer F."/>
            <person name="Land M."/>
            <person name="Hauser L."/>
            <person name="Kyrpides N."/>
            <person name="Kim E."/>
            <person name="Newman D."/>
            <person name="Salticov C."/>
            <person name="Konstantinidis K."/>
            <person name="Klappenback J."/>
            <person name="Tiedje J."/>
            <person name="Richardson P."/>
        </authorList>
    </citation>
    <scope>NUCLEOTIDE SEQUENCE [LARGE SCALE GENOMIC DNA]</scope>
    <source>
        <strain>ANA-3</strain>
    </source>
</reference>
<feature type="chain" id="PRO_1000006319" description="Serine hydroxymethyltransferase">
    <location>
        <begin position="1"/>
        <end position="417"/>
    </location>
</feature>
<feature type="binding site" evidence="1">
    <location>
        <position position="121"/>
    </location>
    <ligand>
        <name>(6S)-5,6,7,8-tetrahydrofolate</name>
        <dbReference type="ChEBI" id="CHEBI:57453"/>
    </ligand>
</feature>
<feature type="binding site" evidence="1">
    <location>
        <begin position="125"/>
        <end position="127"/>
    </location>
    <ligand>
        <name>(6S)-5,6,7,8-tetrahydrofolate</name>
        <dbReference type="ChEBI" id="CHEBI:57453"/>
    </ligand>
</feature>
<feature type="binding site" evidence="1">
    <location>
        <begin position="355"/>
        <end position="357"/>
    </location>
    <ligand>
        <name>(6S)-5,6,7,8-tetrahydrofolate</name>
        <dbReference type="ChEBI" id="CHEBI:57453"/>
    </ligand>
</feature>
<feature type="site" description="Plays an important role in substrate specificity" evidence="1">
    <location>
        <position position="228"/>
    </location>
</feature>
<feature type="modified residue" description="N6-(pyridoxal phosphate)lysine" evidence="1">
    <location>
        <position position="229"/>
    </location>
</feature>
<keyword id="KW-0028">Amino-acid biosynthesis</keyword>
<keyword id="KW-0963">Cytoplasm</keyword>
<keyword id="KW-0554">One-carbon metabolism</keyword>
<keyword id="KW-0663">Pyridoxal phosphate</keyword>
<keyword id="KW-0808">Transferase</keyword>
<evidence type="ECO:0000255" key="1">
    <source>
        <dbReference type="HAMAP-Rule" id="MF_00051"/>
    </source>
</evidence>
<sequence>MLKKDMNIADYDPELFNAIQNETLRQEEHIELIASENYTSPRVMQAQGSQLTNKYAEGYPGKRYYGGCEYVDVVETLAIERAKQLFGATYANVQPHSGSQANSAVYMALLKPGDTVLGMNLAHGGHLTHGSPVNFSGRLYNIIPYGIDESGKIDYDEMERLAVEHKPKMMIGGFSAYSGIVDWARMREIADKIGAYLFVDMAHVAGLIAAGVYPNPVPHAHVVTSTTHKTLAGPRGGIILSAADDEELYKKLNSAVFPGGQGGPLMHVIAGKAVAFKEALEPEFKAYQQQVVKNAKAMVEVFLERGYKIVSGGTDNHLMLVDLIGRDLTGKEADAALGSANITVNKNSVPNDPRSPFVTSGVRIGTPAITRRGFKEAEAKELTGWICDILDDAHNPAVIERVKGQVLALCARFPVYG</sequence>
<dbReference type="EC" id="2.1.2.1" evidence="1"/>
<dbReference type="EMBL" id="CP000469">
    <property type="protein sequence ID" value="ABK47329.1"/>
    <property type="molecule type" value="Genomic_DNA"/>
</dbReference>
<dbReference type="RefSeq" id="WP_011625551.1">
    <property type="nucleotide sequence ID" value="NC_008577.1"/>
</dbReference>
<dbReference type="SMR" id="A0KU60"/>
<dbReference type="STRING" id="94122.Shewana3_1094"/>
<dbReference type="GeneID" id="94727093"/>
<dbReference type="KEGG" id="shn:Shewana3_1094"/>
<dbReference type="eggNOG" id="COG0112">
    <property type="taxonomic scope" value="Bacteria"/>
</dbReference>
<dbReference type="HOGENOM" id="CLU_022477_2_1_6"/>
<dbReference type="OrthoDB" id="9803846at2"/>
<dbReference type="UniPathway" id="UPA00193"/>
<dbReference type="UniPathway" id="UPA00288">
    <property type="reaction ID" value="UER01023"/>
</dbReference>
<dbReference type="Proteomes" id="UP000002589">
    <property type="component" value="Chromosome"/>
</dbReference>
<dbReference type="GO" id="GO:0005829">
    <property type="term" value="C:cytosol"/>
    <property type="evidence" value="ECO:0007669"/>
    <property type="project" value="TreeGrafter"/>
</dbReference>
<dbReference type="GO" id="GO:0004372">
    <property type="term" value="F:glycine hydroxymethyltransferase activity"/>
    <property type="evidence" value="ECO:0007669"/>
    <property type="project" value="UniProtKB-UniRule"/>
</dbReference>
<dbReference type="GO" id="GO:0030170">
    <property type="term" value="F:pyridoxal phosphate binding"/>
    <property type="evidence" value="ECO:0007669"/>
    <property type="project" value="UniProtKB-UniRule"/>
</dbReference>
<dbReference type="GO" id="GO:0019264">
    <property type="term" value="P:glycine biosynthetic process from serine"/>
    <property type="evidence" value="ECO:0007669"/>
    <property type="project" value="UniProtKB-UniRule"/>
</dbReference>
<dbReference type="GO" id="GO:0035999">
    <property type="term" value="P:tetrahydrofolate interconversion"/>
    <property type="evidence" value="ECO:0007669"/>
    <property type="project" value="UniProtKB-UniRule"/>
</dbReference>
<dbReference type="CDD" id="cd00378">
    <property type="entry name" value="SHMT"/>
    <property type="match status" value="1"/>
</dbReference>
<dbReference type="FunFam" id="3.40.640.10:FF:000001">
    <property type="entry name" value="Serine hydroxymethyltransferase"/>
    <property type="match status" value="1"/>
</dbReference>
<dbReference type="FunFam" id="3.90.1150.10:FF:000003">
    <property type="entry name" value="Serine hydroxymethyltransferase"/>
    <property type="match status" value="1"/>
</dbReference>
<dbReference type="Gene3D" id="3.90.1150.10">
    <property type="entry name" value="Aspartate Aminotransferase, domain 1"/>
    <property type="match status" value="1"/>
</dbReference>
<dbReference type="Gene3D" id="3.40.640.10">
    <property type="entry name" value="Type I PLP-dependent aspartate aminotransferase-like (Major domain)"/>
    <property type="match status" value="1"/>
</dbReference>
<dbReference type="HAMAP" id="MF_00051">
    <property type="entry name" value="SHMT"/>
    <property type="match status" value="1"/>
</dbReference>
<dbReference type="InterPro" id="IPR015424">
    <property type="entry name" value="PyrdxlP-dep_Trfase"/>
</dbReference>
<dbReference type="InterPro" id="IPR015421">
    <property type="entry name" value="PyrdxlP-dep_Trfase_major"/>
</dbReference>
<dbReference type="InterPro" id="IPR015422">
    <property type="entry name" value="PyrdxlP-dep_Trfase_small"/>
</dbReference>
<dbReference type="InterPro" id="IPR001085">
    <property type="entry name" value="Ser_HO-MeTrfase"/>
</dbReference>
<dbReference type="InterPro" id="IPR049943">
    <property type="entry name" value="Ser_HO-MeTrfase-like"/>
</dbReference>
<dbReference type="InterPro" id="IPR019798">
    <property type="entry name" value="Ser_HO-MeTrfase_PLP_BS"/>
</dbReference>
<dbReference type="InterPro" id="IPR039429">
    <property type="entry name" value="SHMT-like_dom"/>
</dbReference>
<dbReference type="NCBIfam" id="NF000586">
    <property type="entry name" value="PRK00011.1"/>
    <property type="match status" value="1"/>
</dbReference>
<dbReference type="PANTHER" id="PTHR11680">
    <property type="entry name" value="SERINE HYDROXYMETHYLTRANSFERASE"/>
    <property type="match status" value="1"/>
</dbReference>
<dbReference type="PANTHER" id="PTHR11680:SF50">
    <property type="entry name" value="SERINE HYDROXYMETHYLTRANSFERASE"/>
    <property type="match status" value="1"/>
</dbReference>
<dbReference type="Pfam" id="PF00464">
    <property type="entry name" value="SHMT"/>
    <property type="match status" value="1"/>
</dbReference>
<dbReference type="PIRSF" id="PIRSF000412">
    <property type="entry name" value="SHMT"/>
    <property type="match status" value="1"/>
</dbReference>
<dbReference type="SUPFAM" id="SSF53383">
    <property type="entry name" value="PLP-dependent transferases"/>
    <property type="match status" value="1"/>
</dbReference>
<dbReference type="PROSITE" id="PS00096">
    <property type="entry name" value="SHMT"/>
    <property type="match status" value="1"/>
</dbReference>
<gene>
    <name evidence="1" type="primary">glyA</name>
    <name type="ordered locus">Shewana3_1094</name>
</gene>
<comment type="function">
    <text evidence="1">Catalyzes the reversible interconversion of serine and glycine with tetrahydrofolate (THF) serving as the one-carbon carrier. This reaction serves as the major source of one-carbon groups required for the biosynthesis of purines, thymidylate, methionine, and other important biomolecules. Also exhibits THF-independent aldolase activity toward beta-hydroxyamino acids, producing glycine and aldehydes, via a retro-aldol mechanism.</text>
</comment>
<comment type="catalytic activity">
    <reaction evidence="1">
        <text>(6R)-5,10-methylene-5,6,7,8-tetrahydrofolate + glycine + H2O = (6S)-5,6,7,8-tetrahydrofolate + L-serine</text>
        <dbReference type="Rhea" id="RHEA:15481"/>
        <dbReference type="ChEBI" id="CHEBI:15377"/>
        <dbReference type="ChEBI" id="CHEBI:15636"/>
        <dbReference type="ChEBI" id="CHEBI:33384"/>
        <dbReference type="ChEBI" id="CHEBI:57305"/>
        <dbReference type="ChEBI" id="CHEBI:57453"/>
        <dbReference type="EC" id="2.1.2.1"/>
    </reaction>
</comment>
<comment type="cofactor">
    <cofactor evidence="1">
        <name>pyridoxal 5'-phosphate</name>
        <dbReference type="ChEBI" id="CHEBI:597326"/>
    </cofactor>
</comment>
<comment type="pathway">
    <text evidence="1">One-carbon metabolism; tetrahydrofolate interconversion.</text>
</comment>
<comment type="pathway">
    <text evidence="1">Amino-acid biosynthesis; glycine biosynthesis; glycine from L-serine: step 1/1.</text>
</comment>
<comment type="subunit">
    <text evidence="1">Homodimer.</text>
</comment>
<comment type="subcellular location">
    <subcellularLocation>
        <location evidence="1">Cytoplasm</location>
    </subcellularLocation>
</comment>
<comment type="similarity">
    <text evidence="1">Belongs to the SHMT family.</text>
</comment>